<organism>
    <name type="scientific">Xenopus laevis</name>
    <name type="common">African clawed frog</name>
    <dbReference type="NCBI Taxonomy" id="8355"/>
    <lineage>
        <taxon>Eukaryota</taxon>
        <taxon>Metazoa</taxon>
        <taxon>Chordata</taxon>
        <taxon>Craniata</taxon>
        <taxon>Vertebrata</taxon>
        <taxon>Euteleostomi</taxon>
        <taxon>Amphibia</taxon>
        <taxon>Batrachia</taxon>
        <taxon>Anura</taxon>
        <taxon>Pipoidea</taxon>
        <taxon>Pipidae</taxon>
        <taxon>Xenopodinae</taxon>
        <taxon>Xenopus</taxon>
        <taxon>Xenopus</taxon>
    </lineage>
</organism>
<feature type="chain" id="PRO_0000457520" description="Protein ZAR1-like 1.L">
    <location>
        <begin position="1"/>
        <end position="281"/>
    </location>
</feature>
<feature type="zinc finger region" description="3CxxC-type" evidence="3">
    <location>
        <begin position="183"/>
        <end position="267"/>
    </location>
</feature>
<gene>
    <name evidence="6" type="primary">zar1l.L</name>
</gene>
<accession>A0A1L8HJK9</accession>
<reference key="1">
    <citation type="journal article" date="2016" name="Nature">
        <title>Genome evolution in the allotetraploid frog Xenopus laevis.</title>
        <authorList>
            <person name="Session A.M."/>
            <person name="Uno Y."/>
            <person name="Kwon T."/>
            <person name="Chapman J.A."/>
            <person name="Toyoda A."/>
            <person name="Takahashi S."/>
            <person name="Fukui A."/>
            <person name="Hikosaka A."/>
            <person name="Suzuki A."/>
            <person name="Kondo M."/>
            <person name="van Heeringen S.J."/>
            <person name="Quigley I."/>
            <person name="Heinz S."/>
            <person name="Ogino H."/>
            <person name="Ochi H."/>
            <person name="Hellsten U."/>
            <person name="Lyons J.B."/>
            <person name="Simakov O."/>
            <person name="Putnam N."/>
            <person name="Stites J."/>
            <person name="Kuroki Y."/>
            <person name="Tanaka T."/>
            <person name="Michiue T."/>
            <person name="Watanabe M."/>
            <person name="Bogdanovic O."/>
            <person name="Lister R."/>
            <person name="Georgiou G."/>
            <person name="Paranjpe S.S."/>
            <person name="van Kruijsbergen I."/>
            <person name="Shu S."/>
            <person name="Carlson J."/>
            <person name="Kinoshita T."/>
            <person name="Ohta Y."/>
            <person name="Mawaribuchi S."/>
            <person name="Jenkins J."/>
            <person name="Grimwood J."/>
            <person name="Schmutz J."/>
            <person name="Mitros T."/>
            <person name="Mozaffari S.V."/>
            <person name="Suzuki Y."/>
            <person name="Haramoto Y."/>
            <person name="Yamamoto T.S."/>
            <person name="Takagi C."/>
            <person name="Heald R."/>
            <person name="Miller K."/>
            <person name="Haudenschild C."/>
            <person name="Kitzman J."/>
            <person name="Nakayama T."/>
            <person name="Izutsu Y."/>
            <person name="Robert J."/>
            <person name="Fortriede J."/>
            <person name="Burns K."/>
            <person name="Lotay V."/>
            <person name="Karimi K."/>
            <person name="Yasuoka Y."/>
            <person name="Dichmann D.S."/>
            <person name="Flajnik M.F."/>
            <person name="Houston D.W."/>
            <person name="Shendure J."/>
            <person name="DuPasquier L."/>
            <person name="Vize P.D."/>
            <person name="Zorn A.M."/>
            <person name="Ito M."/>
            <person name="Marcotte E.M."/>
            <person name="Wallingford J.B."/>
            <person name="Ito Y."/>
            <person name="Asashima M."/>
            <person name="Ueno N."/>
            <person name="Matsuda Y."/>
            <person name="Veenstra G.J."/>
            <person name="Fujiyama A."/>
            <person name="Harland R.M."/>
            <person name="Taira M."/>
            <person name="Rokhsar D.S."/>
        </authorList>
    </citation>
    <scope>NUCLEOTIDE SEQUENCE [LARGE SCALE GENOMIC DNA]</scope>
    <source>
        <strain>J</strain>
    </source>
</reference>
<reference key="2">
    <citation type="journal article" date="2022" name="Development">
        <title>The translation regulator Zar1l controls timing of meiosis in Xenopus oocytes.</title>
        <authorList>
            <person name="Heim A."/>
            <person name="Niedermeier M.L."/>
            <person name="Stengel F."/>
            <person name="Mayer T.U."/>
        </authorList>
    </citation>
    <scope>TISSUE SPECIFICITY</scope>
    <scope>DEVELOPMENTAL STAGE</scope>
</reference>
<sequence length="281" mass="32356">MAGLVYPQYPVFPGYRHPYRQHPPLYKPKQQYWKPPYKGAPGPLKPTNPLDCLDGYKWAQLKALLSQLGPEFGLGRRFTKEVGVQVNPRVDACIQCSLGPRTLKNCKAGSFLFHAAPGQHAGLGIIAPVRFPLTVAVYSRLSDRRLFTLPTFTNGGKKECETQMDPAEEDLVLNRPAFQFLEQKYGFFHCKNCQTRWESAYVWCVSGTNKVYFKQFCHKCQKGHNPYYVESIECKRCKKAWCSCPERRHIDLKRPHCQELCGRCKGQRLSCDKTYSFKYII</sequence>
<protein>
    <recommendedName>
        <fullName evidence="5">Protein ZAR1-like 1.L</fullName>
    </recommendedName>
    <alternativeName>
        <fullName evidence="5">Zygote arrest protein 1-like 1.L</fullName>
    </alternativeName>
</protein>
<dbReference type="EMBL" id="CM004468">
    <property type="status" value="NOT_ANNOTATED_CDS"/>
    <property type="molecule type" value="Genomic_DNA"/>
</dbReference>
<dbReference type="RefSeq" id="XP_018103300.1">
    <property type="nucleotide sequence ID" value="XM_018247811.1"/>
</dbReference>
<dbReference type="SMR" id="A0A1L8HJK9"/>
<dbReference type="PaxDb" id="8355-A0A1L8HJK9"/>
<dbReference type="GeneID" id="108708773"/>
<dbReference type="KEGG" id="xla:108708773"/>
<dbReference type="AGR" id="Xenbase:XB-GENE-6486562"/>
<dbReference type="CTD" id="108708773"/>
<dbReference type="Xenbase" id="XB-GENE-6486562">
    <property type="gene designation" value="zar1l2.L"/>
</dbReference>
<dbReference type="OrthoDB" id="9885288at2759"/>
<dbReference type="Proteomes" id="UP000186698">
    <property type="component" value="Chromosome 2L"/>
</dbReference>
<dbReference type="Proteomes" id="UP000694892">
    <property type="component" value="Chromosome 2L"/>
</dbReference>
<dbReference type="Bgee" id="108708773">
    <property type="expression patterns" value="Expressed in oocyte and 8 other cell types or tissues"/>
</dbReference>
<dbReference type="GO" id="GO:0005737">
    <property type="term" value="C:cytoplasm"/>
    <property type="evidence" value="ECO:0000318"/>
    <property type="project" value="GO_Central"/>
</dbReference>
<dbReference type="GO" id="GO:0036464">
    <property type="term" value="C:cytoplasmic ribonucleoprotein granule"/>
    <property type="evidence" value="ECO:0007669"/>
    <property type="project" value="UniProtKB-SubCell"/>
</dbReference>
<dbReference type="GO" id="GO:0003729">
    <property type="term" value="F:mRNA binding"/>
    <property type="evidence" value="ECO:0007669"/>
    <property type="project" value="UniProtKB-ARBA"/>
</dbReference>
<dbReference type="GO" id="GO:0008270">
    <property type="term" value="F:zinc ion binding"/>
    <property type="evidence" value="ECO:0007669"/>
    <property type="project" value="UniProtKB-KW"/>
</dbReference>
<dbReference type="GO" id="GO:0017148">
    <property type="term" value="P:negative regulation of translation"/>
    <property type="evidence" value="ECO:0007669"/>
    <property type="project" value="UniProtKB-ARBA"/>
</dbReference>
<dbReference type="GO" id="GO:0048477">
    <property type="term" value="P:oogenesis"/>
    <property type="evidence" value="ECO:0007669"/>
    <property type="project" value="UniProtKB-KW"/>
</dbReference>
<dbReference type="GO" id="GO:0006412">
    <property type="term" value="P:translation"/>
    <property type="evidence" value="ECO:0000318"/>
    <property type="project" value="GO_Central"/>
</dbReference>
<dbReference type="InterPro" id="IPR026775">
    <property type="entry name" value="Zar1"/>
</dbReference>
<dbReference type="InterPro" id="IPR027377">
    <property type="entry name" value="ZAR1/RTP1-5-like_Znf-3CxxC"/>
</dbReference>
<dbReference type="PANTHER" id="PTHR31054:SF7">
    <property type="entry name" value="PROTEIN ZAR1-LIKE 1.L"/>
    <property type="match status" value="1"/>
</dbReference>
<dbReference type="PANTHER" id="PTHR31054">
    <property type="entry name" value="ZYGOTE ARREST PROTEIN 1-LIKE ISOFORM X1"/>
    <property type="match status" value="1"/>
</dbReference>
<dbReference type="Pfam" id="PF13695">
    <property type="entry name" value="Zn_ribbon_3CxxC"/>
    <property type="match status" value="1"/>
</dbReference>
<dbReference type="SMART" id="SM01328">
    <property type="entry name" value="zf-3CxxC"/>
    <property type="match status" value="1"/>
</dbReference>
<name>ZA1LL_XENLA</name>
<evidence type="ECO:0000250" key="1">
    <source>
        <dbReference type="UniProtKB" id="A0A1L8HBI7"/>
    </source>
</evidence>
<evidence type="ECO:0000250" key="2">
    <source>
        <dbReference type="UniProtKB" id="Q80SU3"/>
    </source>
</evidence>
<evidence type="ECO:0000255" key="3"/>
<evidence type="ECO:0000269" key="4">
    <source>
    </source>
</evidence>
<evidence type="ECO:0000305" key="5"/>
<evidence type="ECO:0000312" key="6">
    <source>
        <dbReference type="Xenbase" id="XB-GENE-6486562"/>
    </source>
</evidence>
<keyword id="KW-0963">Cytoplasm</keyword>
<keyword id="KW-0217">Developmental protein</keyword>
<keyword id="KW-0221">Differentiation</keyword>
<keyword id="KW-0479">Metal-binding</keyword>
<keyword id="KW-0896">Oogenesis</keyword>
<keyword id="KW-1185">Reference proteome</keyword>
<keyword id="KW-0694">RNA-binding</keyword>
<keyword id="KW-0862">Zinc</keyword>
<keyword id="KW-0863">Zinc-finger</keyword>
<comment type="function">
    <text evidence="1 2">mRNA-binding protein required for maternal mRNA storage, translation and degradation during oocyte maturation. Controls timing of meiosis during oogenesis (By similarity). Probably promotes formation of some phase-separated membraneless compartment that stores maternal mRNAs in oocytes: acts by undergoing liquid-liquid phase separation upon binding to maternal mRNAs (By similarity). Binds to the 3'-UTR of maternal mRNAs, inhibiting their translation (By similarity).</text>
</comment>
<comment type="subunit">
    <text evidence="1">Component of a cytoplasmic ribonucleoprotein complex together with eif4enif1/4E-T and cpeb1.</text>
</comment>
<comment type="subcellular location">
    <subcellularLocation>
        <location evidence="1">Cytoplasm</location>
        <location evidence="1">Cytoplasmic ribonucleoprotein granule</location>
    </subcellularLocation>
</comment>
<comment type="tissue specificity">
    <text evidence="4">Expressed in oocytes.</text>
</comment>
<comment type="developmental stage">
    <text evidence="4">Expressed in stage VI oocytes; its levels clearly decrease after progesterone addition.</text>
</comment>
<comment type="domain">
    <text evidence="2">Disordered regions undergo liquid-liquid phase separation (LLPS) for the formation of membraneless compartments that store maternal mRNAs in oocytes.</text>
</comment>
<comment type="domain">
    <text evidence="1">The 3CxxC-type mediates binding to the 3'-UTR of mRNAs.</text>
</comment>
<comment type="similarity">
    <text evidence="5">Belongs to the ZAR1 family.</text>
</comment>
<proteinExistence type="evidence at transcript level"/>